<gene>
    <name evidence="1" type="primary">fluC</name>
    <name evidence="1" type="synonym">crcB</name>
    <name type="ordered locus">Bcenmc03_0908</name>
</gene>
<reference key="1">
    <citation type="submission" date="2008-02" db="EMBL/GenBank/DDBJ databases">
        <title>Complete sequence of chromosome 1 of Burkholderia cenocepacia MC0-3.</title>
        <authorList>
            <person name="Copeland A."/>
            <person name="Lucas S."/>
            <person name="Lapidus A."/>
            <person name="Barry K."/>
            <person name="Bruce D."/>
            <person name="Goodwin L."/>
            <person name="Glavina del Rio T."/>
            <person name="Dalin E."/>
            <person name="Tice H."/>
            <person name="Pitluck S."/>
            <person name="Chain P."/>
            <person name="Malfatti S."/>
            <person name="Shin M."/>
            <person name="Vergez L."/>
            <person name="Schmutz J."/>
            <person name="Larimer F."/>
            <person name="Land M."/>
            <person name="Hauser L."/>
            <person name="Kyrpides N."/>
            <person name="Mikhailova N."/>
            <person name="Tiedje J."/>
            <person name="Richardson P."/>
        </authorList>
    </citation>
    <scope>NUCLEOTIDE SEQUENCE [LARGE SCALE GENOMIC DNA]</scope>
    <source>
        <strain>MC0-3</strain>
    </source>
</reference>
<organism>
    <name type="scientific">Burkholderia orbicola (strain MC0-3)</name>
    <dbReference type="NCBI Taxonomy" id="406425"/>
    <lineage>
        <taxon>Bacteria</taxon>
        <taxon>Pseudomonadati</taxon>
        <taxon>Pseudomonadota</taxon>
        <taxon>Betaproteobacteria</taxon>
        <taxon>Burkholderiales</taxon>
        <taxon>Burkholderiaceae</taxon>
        <taxon>Burkholderia</taxon>
        <taxon>Burkholderia cepacia complex</taxon>
        <taxon>Burkholderia orbicola</taxon>
    </lineage>
</organism>
<name>FLUC_BURO0</name>
<sequence length="128" mass="13511">MFYSIVAIFVGAGLGALLRWFLSLALNAFFPAVPLGTLASNLIGGYVIGVAAVVFTVRVGLPPEWRLFVITGFLGGLTTFSTYSVEVMTHALEGEFGWALAVAALHLTGSFALTALGMWTARAWLAVA</sequence>
<dbReference type="EMBL" id="CP000958">
    <property type="protein sequence ID" value="ACA90085.1"/>
    <property type="molecule type" value="Genomic_DNA"/>
</dbReference>
<dbReference type="RefSeq" id="WP_012328072.1">
    <property type="nucleotide sequence ID" value="NC_010508.1"/>
</dbReference>
<dbReference type="SMR" id="B1JX66"/>
<dbReference type="GeneID" id="83047698"/>
<dbReference type="KEGG" id="bcm:Bcenmc03_0908"/>
<dbReference type="HOGENOM" id="CLU_114342_3_3_4"/>
<dbReference type="Proteomes" id="UP000002169">
    <property type="component" value="Chromosome 1"/>
</dbReference>
<dbReference type="GO" id="GO:0005886">
    <property type="term" value="C:plasma membrane"/>
    <property type="evidence" value="ECO:0007669"/>
    <property type="project" value="UniProtKB-SubCell"/>
</dbReference>
<dbReference type="GO" id="GO:0062054">
    <property type="term" value="F:fluoride channel activity"/>
    <property type="evidence" value="ECO:0007669"/>
    <property type="project" value="UniProtKB-UniRule"/>
</dbReference>
<dbReference type="GO" id="GO:0046872">
    <property type="term" value="F:metal ion binding"/>
    <property type="evidence" value="ECO:0007669"/>
    <property type="project" value="UniProtKB-KW"/>
</dbReference>
<dbReference type="GO" id="GO:0140114">
    <property type="term" value="P:cellular detoxification of fluoride"/>
    <property type="evidence" value="ECO:0007669"/>
    <property type="project" value="UniProtKB-UniRule"/>
</dbReference>
<dbReference type="HAMAP" id="MF_00454">
    <property type="entry name" value="FluC"/>
    <property type="match status" value="1"/>
</dbReference>
<dbReference type="InterPro" id="IPR003691">
    <property type="entry name" value="FluC"/>
</dbReference>
<dbReference type="NCBIfam" id="TIGR00494">
    <property type="entry name" value="crcB"/>
    <property type="match status" value="1"/>
</dbReference>
<dbReference type="NCBIfam" id="NF010792">
    <property type="entry name" value="PRK14196.1"/>
    <property type="match status" value="1"/>
</dbReference>
<dbReference type="PANTHER" id="PTHR28259">
    <property type="entry name" value="FLUORIDE EXPORT PROTEIN 1-RELATED"/>
    <property type="match status" value="1"/>
</dbReference>
<dbReference type="PANTHER" id="PTHR28259:SF1">
    <property type="entry name" value="FLUORIDE EXPORT PROTEIN 1-RELATED"/>
    <property type="match status" value="1"/>
</dbReference>
<dbReference type="Pfam" id="PF02537">
    <property type="entry name" value="CRCB"/>
    <property type="match status" value="1"/>
</dbReference>
<evidence type="ECO:0000255" key="1">
    <source>
        <dbReference type="HAMAP-Rule" id="MF_00454"/>
    </source>
</evidence>
<comment type="function">
    <text evidence="1">Fluoride-specific ion channel. Important for reducing fluoride concentration in the cell, thus reducing its toxicity.</text>
</comment>
<comment type="catalytic activity">
    <reaction evidence="1">
        <text>fluoride(in) = fluoride(out)</text>
        <dbReference type="Rhea" id="RHEA:76159"/>
        <dbReference type="ChEBI" id="CHEBI:17051"/>
    </reaction>
    <physiologicalReaction direction="left-to-right" evidence="1">
        <dbReference type="Rhea" id="RHEA:76160"/>
    </physiologicalReaction>
</comment>
<comment type="activity regulation">
    <text evidence="1">Na(+) is not transported, but it plays an essential structural role and its presence is essential for fluoride channel function.</text>
</comment>
<comment type="subcellular location">
    <subcellularLocation>
        <location evidence="1">Cell inner membrane</location>
        <topology evidence="1">Multi-pass membrane protein</topology>
    </subcellularLocation>
</comment>
<comment type="similarity">
    <text evidence="1">Belongs to the fluoride channel Fluc/FEX (TC 1.A.43) family.</text>
</comment>
<protein>
    <recommendedName>
        <fullName evidence="1">Fluoride-specific ion channel FluC</fullName>
    </recommendedName>
</protein>
<feature type="chain" id="PRO_1000189711" description="Fluoride-specific ion channel FluC">
    <location>
        <begin position="1"/>
        <end position="128"/>
    </location>
</feature>
<feature type="transmembrane region" description="Helical" evidence="1">
    <location>
        <begin position="5"/>
        <end position="25"/>
    </location>
</feature>
<feature type="transmembrane region" description="Helical" evidence="1">
    <location>
        <begin position="35"/>
        <end position="55"/>
    </location>
</feature>
<feature type="transmembrane region" description="Helical" evidence="1">
    <location>
        <begin position="67"/>
        <end position="87"/>
    </location>
</feature>
<feature type="transmembrane region" description="Helical" evidence="1">
    <location>
        <begin position="96"/>
        <end position="116"/>
    </location>
</feature>
<feature type="binding site" evidence="1">
    <location>
        <position position="75"/>
    </location>
    <ligand>
        <name>Na(+)</name>
        <dbReference type="ChEBI" id="CHEBI:29101"/>
        <note>structural</note>
    </ligand>
</feature>
<feature type="binding site" evidence="1">
    <location>
        <position position="78"/>
    </location>
    <ligand>
        <name>Na(+)</name>
        <dbReference type="ChEBI" id="CHEBI:29101"/>
        <note>structural</note>
    </ligand>
</feature>
<proteinExistence type="inferred from homology"/>
<keyword id="KW-0997">Cell inner membrane</keyword>
<keyword id="KW-1003">Cell membrane</keyword>
<keyword id="KW-0407">Ion channel</keyword>
<keyword id="KW-0406">Ion transport</keyword>
<keyword id="KW-0472">Membrane</keyword>
<keyword id="KW-0479">Metal-binding</keyword>
<keyword id="KW-0915">Sodium</keyword>
<keyword id="KW-0812">Transmembrane</keyword>
<keyword id="KW-1133">Transmembrane helix</keyword>
<keyword id="KW-0813">Transport</keyword>
<accession>B1JX66</accession>